<feature type="chain" id="PRO_0000181354" description="Ceramide kinase">
    <location>
        <begin position="1"/>
        <end position="537"/>
    </location>
</feature>
<feature type="domain" description="DAGKc" evidence="2">
    <location>
        <begin position="128"/>
        <end position="278"/>
    </location>
</feature>
<feature type="region of interest" description="Required for binding to sulfatide and phosphoinositides" evidence="6">
    <location>
        <begin position="1"/>
        <end position="125"/>
    </location>
</feature>
<feature type="region of interest" description="Essential for enzyme activity" evidence="5">
    <location>
        <begin position="1"/>
        <end position="115"/>
    </location>
</feature>
<feature type="active site" description="Proton donor/acceptor" evidence="1">
    <location>
        <position position="197"/>
    </location>
</feature>
<feature type="binding site" evidence="2">
    <location>
        <begin position="138"/>
        <end position="140"/>
    </location>
    <ligand>
        <name>ATP</name>
        <dbReference type="ChEBI" id="CHEBI:30616"/>
    </ligand>
</feature>
<feature type="binding site" evidence="2">
    <location>
        <begin position="170"/>
        <end position="174"/>
    </location>
    <ligand>
        <name>ATP</name>
        <dbReference type="ChEBI" id="CHEBI:30616"/>
    </ligand>
</feature>
<feature type="binding site" evidence="1">
    <location>
        <begin position="195"/>
        <end position="198"/>
    </location>
    <ligand>
        <name>substrate</name>
    </ligand>
</feature>
<feature type="binding site" evidence="2">
    <location>
        <position position="202"/>
    </location>
    <ligand>
        <name>ATP</name>
        <dbReference type="ChEBI" id="CHEBI:30616"/>
    </ligand>
</feature>
<feature type="binding site" evidence="2">
    <location>
        <begin position="239"/>
        <end position="241"/>
    </location>
    <ligand>
        <name>ATP</name>
        <dbReference type="ChEBI" id="CHEBI:30616"/>
    </ligand>
</feature>
<feature type="binding site" evidence="2">
    <location>
        <position position="304"/>
    </location>
    <ligand>
        <name>ATP</name>
        <dbReference type="ChEBI" id="CHEBI:30616"/>
    </ligand>
</feature>
<feature type="binding site" evidence="2">
    <location>
        <position position="310"/>
    </location>
    <ligand>
        <name>ATP</name>
        <dbReference type="ChEBI" id="CHEBI:30616"/>
    </ligand>
</feature>
<feature type="binding site" evidence="2">
    <location>
        <begin position="502"/>
        <end position="504"/>
    </location>
    <ligand>
        <name>ATP</name>
        <dbReference type="ChEBI" id="CHEBI:30616"/>
    </ligand>
</feature>
<feature type="modified residue" description="Phosphoserine" evidence="7">
    <location>
        <position position="340"/>
    </location>
</feature>
<feature type="modified residue" description="Phosphoserine" evidence="7">
    <location>
        <position position="408"/>
    </location>
</feature>
<feature type="splice variant" id="VSP_056944" description="In isoform 2." evidence="9">
    <location>
        <begin position="1"/>
        <end position="198"/>
    </location>
</feature>
<feature type="sequence variant" id="VAR_053685" description="In dbSNP:rs16995615.">
    <original>I</original>
    <variation>V</variation>
    <location>
        <position position="191"/>
    </location>
</feature>
<feature type="sequence variant" id="VAR_053686" description="In dbSNP:rs9306515.">
    <original>T</original>
    <variation>M</variation>
    <location>
        <position position="211"/>
    </location>
</feature>
<feature type="sequence variant" id="VAR_053687" description="In dbSNP:rs13057352.">
    <original>L</original>
    <variation>F</variation>
    <location>
        <position position="306"/>
    </location>
</feature>
<feature type="mutagenesis site" description="99% decrease in catalytic activity but no effect on substrate affinity." evidence="4">
    <original>L</original>
    <variation>A</variation>
    <location>
        <position position="10"/>
    </location>
</feature>
<feature type="mutagenesis site" description="71% decrease in catalytic activity but no effect on substrate affinity." evidence="4">
    <original>L</original>
    <variation>I</variation>
    <location>
        <position position="10"/>
    </location>
</feature>
<feature type="mutagenesis site" description="15% decrease in catalytic activity and decreased stability." evidence="7">
    <original>S</original>
    <variation>A</variation>
    <location>
        <position position="340"/>
    </location>
</feature>
<accession>Q8TCT0</accession>
<accession>A0JNT4</accession>
<accession>A8K611</accession>
<accession>Q6NX59</accession>
<accession>Q9BYB3</accession>
<accession>Q9UGE5</accession>
<protein>
    <recommendedName>
        <fullName>Ceramide kinase</fullName>
        <shortName>hCERK</shortName>
        <ecNumber evidence="3 5 6">2.7.1.138</ecNumber>
    </recommendedName>
    <alternativeName>
        <fullName>Acylsphingosine kinase</fullName>
    </alternativeName>
    <alternativeName>
        <fullName>Lipid kinase 4</fullName>
        <shortName>LK4</shortName>
    </alternativeName>
</protein>
<evidence type="ECO:0000250" key="1">
    <source>
        <dbReference type="UniProtKB" id="Q9NYA1"/>
    </source>
</evidence>
<evidence type="ECO:0000255" key="2">
    <source>
        <dbReference type="PROSITE-ProRule" id="PRU00783"/>
    </source>
</evidence>
<evidence type="ECO:0000269" key="3">
    <source>
    </source>
</evidence>
<evidence type="ECO:0000269" key="4">
    <source>
    </source>
</evidence>
<evidence type="ECO:0000269" key="5">
    <source>
    </source>
</evidence>
<evidence type="ECO:0000269" key="6">
    <source>
    </source>
</evidence>
<evidence type="ECO:0000269" key="7">
    <source>
    </source>
</evidence>
<evidence type="ECO:0000269" key="8">
    <source>
    </source>
</evidence>
<evidence type="ECO:0000303" key="9">
    <source>
    </source>
</evidence>
<evidence type="ECO:0000305" key="10">
    <source>
    </source>
</evidence>
<evidence type="ECO:0000305" key="11">
    <source>
    </source>
</evidence>
<evidence type="ECO:0000305" key="12">
    <source>
    </source>
</evidence>
<name>CERK1_HUMAN</name>
<reference key="1">
    <citation type="journal article" date="2002" name="J. Biol. Chem.">
        <title>Ceramide kinase, a novel lipid kinase. Molecular cloning and functional characterization.</title>
        <authorList>
            <person name="Sugiura M."/>
            <person name="Kono K."/>
            <person name="Liu H."/>
            <person name="Shimizugawa T."/>
            <person name="Minekura H."/>
            <person name="Spiegel S."/>
            <person name="Kohama T."/>
        </authorList>
    </citation>
    <scope>NUCLEOTIDE SEQUENCE [MRNA] (ISOFORM 1)</scope>
    <scope>FUNCTION</scope>
    <scope>CATALYTIC ACTIVITY</scope>
    <scope>BIOPHYSICOCHEMICAL PROPERTIES</scope>
    <scope>TISSUE SPECIFICITY</scope>
    <source>
        <tissue>Leukemia</tissue>
    </source>
</reference>
<reference key="2">
    <citation type="journal article" date="2006" name="J. Lipid Res.">
        <title>Further characterization of mammalian ceramide kinase: substrate delivery and (stereo)specificity, tissue distribution, and subcellular localization studies.</title>
        <authorList>
            <person name="Van Overloop H."/>
            <person name="Gijsbers S."/>
            <person name="Van Veldhoven P.P."/>
        </authorList>
    </citation>
    <scope>NUCLEOTIDE SEQUENCE [MRNA] (ISOFORM 1)</scope>
    <scope>FUNCTION</scope>
    <scope>CATALYTIC ACTIVITY</scope>
    <scope>SUBCELLULAR LOCATION</scope>
    <scope>BIOPHYSICOCHEMICAL PROPERTIES</scope>
    <scope>COFACTOR</scope>
    <scope>ACTIVITY REGULATION</scope>
    <scope>REGION ESSENTIAL FOR ENZYME ACTIVITY</scope>
</reference>
<reference key="3">
    <citation type="journal article" date="2004" name="Genome Biol.">
        <title>A genome annotation-driven approach to cloning the human ORFeome.</title>
        <authorList>
            <person name="Collins J.E."/>
            <person name="Wright C.L."/>
            <person name="Edwards C.A."/>
            <person name="Davis M.P."/>
            <person name="Grinham J.A."/>
            <person name="Cole C.G."/>
            <person name="Goward M.E."/>
            <person name="Aguado B."/>
            <person name="Mallya M."/>
            <person name="Mokrab Y."/>
            <person name="Huckle E.J."/>
            <person name="Beare D.M."/>
            <person name="Dunham I."/>
        </authorList>
    </citation>
    <scope>NUCLEOTIDE SEQUENCE [LARGE SCALE MRNA] (ISOFORM 1)</scope>
</reference>
<reference key="4">
    <citation type="journal article" date="2004" name="Nat. Genet.">
        <title>Complete sequencing and characterization of 21,243 full-length human cDNAs.</title>
        <authorList>
            <person name="Ota T."/>
            <person name="Suzuki Y."/>
            <person name="Nishikawa T."/>
            <person name="Otsuki T."/>
            <person name="Sugiyama T."/>
            <person name="Irie R."/>
            <person name="Wakamatsu A."/>
            <person name="Hayashi K."/>
            <person name="Sato H."/>
            <person name="Nagai K."/>
            <person name="Kimura K."/>
            <person name="Makita H."/>
            <person name="Sekine M."/>
            <person name="Obayashi M."/>
            <person name="Nishi T."/>
            <person name="Shibahara T."/>
            <person name="Tanaka T."/>
            <person name="Ishii S."/>
            <person name="Yamamoto J."/>
            <person name="Saito K."/>
            <person name="Kawai Y."/>
            <person name="Isono Y."/>
            <person name="Nakamura Y."/>
            <person name="Nagahari K."/>
            <person name="Murakami K."/>
            <person name="Yasuda T."/>
            <person name="Iwayanagi T."/>
            <person name="Wagatsuma M."/>
            <person name="Shiratori A."/>
            <person name="Sudo H."/>
            <person name="Hosoiri T."/>
            <person name="Kaku Y."/>
            <person name="Kodaira H."/>
            <person name="Kondo H."/>
            <person name="Sugawara M."/>
            <person name="Takahashi M."/>
            <person name="Kanda K."/>
            <person name="Yokoi T."/>
            <person name="Furuya T."/>
            <person name="Kikkawa E."/>
            <person name="Omura Y."/>
            <person name="Abe K."/>
            <person name="Kamihara K."/>
            <person name="Katsuta N."/>
            <person name="Sato K."/>
            <person name="Tanikawa M."/>
            <person name="Yamazaki M."/>
            <person name="Ninomiya K."/>
            <person name="Ishibashi T."/>
            <person name="Yamashita H."/>
            <person name="Murakawa K."/>
            <person name="Fujimori K."/>
            <person name="Tanai H."/>
            <person name="Kimata M."/>
            <person name="Watanabe M."/>
            <person name="Hiraoka S."/>
            <person name="Chiba Y."/>
            <person name="Ishida S."/>
            <person name="Ono Y."/>
            <person name="Takiguchi S."/>
            <person name="Watanabe S."/>
            <person name="Yosida M."/>
            <person name="Hotuta T."/>
            <person name="Kusano J."/>
            <person name="Kanehori K."/>
            <person name="Takahashi-Fujii A."/>
            <person name="Hara H."/>
            <person name="Tanase T.-O."/>
            <person name="Nomura Y."/>
            <person name="Togiya S."/>
            <person name="Komai F."/>
            <person name="Hara R."/>
            <person name="Takeuchi K."/>
            <person name="Arita M."/>
            <person name="Imose N."/>
            <person name="Musashino K."/>
            <person name="Yuuki H."/>
            <person name="Oshima A."/>
            <person name="Sasaki N."/>
            <person name="Aotsuka S."/>
            <person name="Yoshikawa Y."/>
            <person name="Matsunawa H."/>
            <person name="Ichihara T."/>
            <person name="Shiohata N."/>
            <person name="Sano S."/>
            <person name="Moriya S."/>
            <person name="Momiyama H."/>
            <person name="Satoh N."/>
            <person name="Takami S."/>
            <person name="Terashima Y."/>
            <person name="Suzuki O."/>
            <person name="Nakagawa S."/>
            <person name="Senoh A."/>
            <person name="Mizoguchi H."/>
            <person name="Goto Y."/>
            <person name="Shimizu F."/>
            <person name="Wakebe H."/>
            <person name="Hishigaki H."/>
            <person name="Watanabe T."/>
            <person name="Sugiyama A."/>
            <person name="Takemoto M."/>
            <person name="Kawakami B."/>
            <person name="Yamazaki M."/>
            <person name="Watanabe K."/>
            <person name="Kumagai A."/>
            <person name="Itakura S."/>
            <person name="Fukuzumi Y."/>
            <person name="Fujimori Y."/>
            <person name="Komiyama M."/>
            <person name="Tashiro H."/>
            <person name="Tanigami A."/>
            <person name="Fujiwara T."/>
            <person name="Ono T."/>
            <person name="Yamada K."/>
            <person name="Fujii Y."/>
            <person name="Ozaki K."/>
            <person name="Hirao M."/>
            <person name="Ohmori Y."/>
            <person name="Kawabata A."/>
            <person name="Hikiji T."/>
            <person name="Kobatake N."/>
            <person name="Inagaki H."/>
            <person name="Ikema Y."/>
            <person name="Okamoto S."/>
            <person name="Okitani R."/>
            <person name="Kawakami T."/>
            <person name="Noguchi S."/>
            <person name="Itoh T."/>
            <person name="Shigeta K."/>
            <person name="Senba T."/>
            <person name="Matsumura K."/>
            <person name="Nakajima Y."/>
            <person name="Mizuno T."/>
            <person name="Morinaga M."/>
            <person name="Sasaki M."/>
            <person name="Togashi T."/>
            <person name="Oyama M."/>
            <person name="Hata H."/>
            <person name="Watanabe M."/>
            <person name="Komatsu T."/>
            <person name="Mizushima-Sugano J."/>
            <person name="Satoh T."/>
            <person name="Shirai Y."/>
            <person name="Takahashi Y."/>
            <person name="Nakagawa K."/>
            <person name="Okumura K."/>
            <person name="Nagase T."/>
            <person name="Nomura N."/>
            <person name="Kikuchi H."/>
            <person name="Masuho Y."/>
            <person name="Yamashita R."/>
            <person name="Nakai K."/>
            <person name="Yada T."/>
            <person name="Nakamura Y."/>
            <person name="Ohara O."/>
            <person name="Isogai T."/>
            <person name="Sugano S."/>
        </authorList>
    </citation>
    <scope>NUCLEOTIDE SEQUENCE [LARGE SCALE MRNA] (ISOFORM 1)</scope>
    <source>
        <tissue>Brain</tissue>
    </source>
</reference>
<reference key="5">
    <citation type="journal article" date="1999" name="Nature">
        <title>The DNA sequence of human chromosome 22.</title>
        <authorList>
            <person name="Dunham I."/>
            <person name="Hunt A.R."/>
            <person name="Collins J.E."/>
            <person name="Bruskiewich R."/>
            <person name="Beare D.M."/>
            <person name="Clamp M."/>
            <person name="Smink L.J."/>
            <person name="Ainscough R."/>
            <person name="Almeida J.P."/>
            <person name="Babbage A.K."/>
            <person name="Bagguley C."/>
            <person name="Bailey J."/>
            <person name="Barlow K.F."/>
            <person name="Bates K.N."/>
            <person name="Beasley O.P."/>
            <person name="Bird C.P."/>
            <person name="Blakey S.E."/>
            <person name="Bridgeman A.M."/>
            <person name="Buck D."/>
            <person name="Burgess J."/>
            <person name="Burrill W.D."/>
            <person name="Burton J."/>
            <person name="Carder C."/>
            <person name="Carter N.P."/>
            <person name="Chen Y."/>
            <person name="Clark G."/>
            <person name="Clegg S.M."/>
            <person name="Cobley V.E."/>
            <person name="Cole C.G."/>
            <person name="Collier R.E."/>
            <person name="Connor R."/>
            <person name="Conroy D."/>
            <person name="Corby N.R."/>
            <person name="Coville G.J."/>
            <person name="Cox A.V."/>
            <person name="Davis J."/>
            <person name="Dawson E."/>
            <person name="Dhami P.D."/>
            <person name="Dockree C."/>
            <person name="Dodsworth S.J."/>
            <person name="Durbin R.M."/>
            <person name="Ellington A.G."/>
            <person name="Evans K.L."/>
            <person name="Fey J.M."/>
            <person name="Fleming K."/>
            <person name="French L."/>
            <person name="Garner A.A."/>
            <person name="Gilbert J.G.R."/>
            <person name="Goward M.E."/>
            <person name="Grafham D.V."/>
            <person name="Griffiths M.N.D."/>
            <person name="Hall C."/>
            <person name="Hall R.E."/>
            <person name="Hall-Tamlyn G."/>
            <person name="Heathcott R.W."/>
            <person name="Ho S."/>
            <person name="Holmes S."/>
            <person name="Hunt S.E."/>
            <person name="Jones M.C."/>
            <person name="Kershaw J."/>
            <person name="Kimberley A.M."/>
            <person name="King A."/>
            <person name="Laird G.K."/>
            <person name="Langford C.F."/>
            <person name="Leversha M.A."/>
            <person name="Lloyd C."/>
            <person name="Lloyd D.M."/>
            <person name="Martyn I.D."/>
            <person name="Mashreghi-Mohammadi M."/>
            <person name="Matthews L.H."/>
            <person name="Mccann O.T."/>
            <person name="Mcclay J."/>
            <person name="Mclaren S."/>
            <person name="McMurray A.A."/>
            <person name="Milne S.A."/>
            <person name="Mortimore B.J."/>
            <person name="Odell C.N."/>
            <person name="Pavitt R."/>
            <person name="Pearce A.V."/>
            <person name="Pearson D."/>
            <person name="Phillimore B.J.C.T."/>
            <person name="Phillips S.H."/>
            <person name="Plumb R.W."/>
            <person name="Ramsay H."/>
            <person name="Ramsey Y."/>
            <person name="Rogers L."/>
            <person name="Ross M.T."/>
            <person name="Scott C.E."/>
            <person name="Sehra H.K."/>
            <person name="Skuce C.D."/>
            <person name="Smalley S."/>
            <person name="Smith M.L."/>
            <person name="Soderlund C."/>
            <person name="Spragon L."/>
            <person name="Steward C.A."/>
            <person name="Sulston J.E."/>
            <person name="Swann R.M."/>
            <person name="Vaudin M."/>
            <person name="Wall M."/>
            <person name="Wallis J.M."/>
            <person name="Whiteley M.N."/>
            <person name="Willey D.L."/>
            <person name="Williams L."/>
            <person name="Williams S.A."/>
            <person name="Williamson H."/>
            <person name="Wilmer T.E."/>
            <person name="Wilming L."/>
            <person name="Wright C.L."/>
            <person name="Hubbard T."/>
            <person name="Bentley D.R."/>
            <person name="Beck S."/>
            <person name="Rogers J."/>
            <person name="Shimizu N."/>
            <person name="Minoshima S."/>
            <person name="Kawasaki K."/>
            <person name="Sasaki T."/>
            <person name="Asakawa S."/>
            <person name="Kudoh J."/>
            <person name="Shintani A."/>
            <person name="Shibuya K."/>
            <person name="Yoshizaki Y."/>
            <person name="Aoki N."/>
            <person name="Mitsuyama S."/>
            <person name="Roe B.A."/>
            <person name="Chen F."/>
            <person name="Chu L."/>
            <person name="Crabtree J."/>
            <person name="Deschamps S."/>
            <person name="Do A."/>
            <person name="Do T."/>
            <person name="Dorman A."/>
            <person name="Fang F."/>
            <person name="Fu Y."/>
            <person name="Hu P."/>
            <person name="Hua A."/>
            <person name="Kenton S."/>
            <person name="Lai H."/>
            <person name="Lao H.I."/>
            <person name="Lewis J."/>
            <person name="Lewis S."/>
            <person name="Lin S.-P."/>
            <person name="Loh P."/>
            <person name="Malaj E."/>
            <person name="Nguyen T."/>
            <person name="Pan H."/>
            <person name="Phan S."/>
            <person name="Qi S."/>
            <person name="Qian Y."/>
            <person name="Ray L."/>
            <person name="Ren Q."/>
            <person name="Shaull S."/>
            <person name="Sloan D."/>
            <person name="Song L."/>
            <person name="Wang Q."/>
            <person name="Wang Y."/>
            <person name="Wang Z."/>
            <person name="White J."/>
            <person name="Willingham D."/>
            <person name="Wu H."/>
            <person name="Yao Z."/>
            <person name="Zhan M."/>
            <person name="Zhang G."/>
            <person name="Chissoe S."/>
            <person name="Murray J."/>
            <person name="Miller N."/>
            <person name="Minx P."/>
            <person name="Fulton R."/>
            <person name="Johnson D."/>
            <person name="Bemis G."/>
            <person name="Bentley D."/>
            <person name="Bradshaw H."/>
            <person name="Bourne S."/>
            <person name="Cordes M."/>
            <person name="Du Z."/>
            <person name="Fulton L."/>
            <person name="Goela D."/>
            <person name="Graves T."/>
            <person name="Hawkins J."/>
            <person name="Hinds K."/>
            <person name="Kemp K."/>
            <person name="Latreille P."/>
            <person name="Layman D."/>
            <person name="Ozersky P."/>
            <person name="Rohlfing T."/>
            <person name="Scheet P."/>
            <person name="Walker C."/>
            <person name="Wamsley A."/>
            <person name="Wohldmann P."/>
            <person name="Pepin K."/>
            <person name="Nelson J."/>
            <person name="Korf I."/>
            <person name="Bedell J.A."/>
            <person name="Hillier L.W."/>
            <person name="Mardis E."/>
            <person name="Waterston R."/>
            <person name="Wilson R."/>
            <person name="Emanuel B.S."/>
            <person name="Shaikh T."/>
            <person name="Kurahashi H."/>
            <person name="Saitta S."/>
            <person name="Budarf M.L."/>
            <person name="McDermid H.E."/>
            <person name="Johnson A."/>
            <person name="Wong A.C.C."/>
            <person name="Morrow B.E."/>
            <person name="Edelmann L."/>
            <person name="Kim U.J."/>
            <person name="Shizuya H."/>
            <person name="Simon M.I."/>
            <person name="Dumanski J.P."/>
            <person name="Peyrard M."/>
            <person name="Kedra D."/>
            <person name="Seroussi E."/>
            <person name="Fransson I."/>
            <person name="Tapia I."/>
            <person name="Bruder C.E."/>
            <person name="O'Brien K.P."/>
            <person name="Wilkinson P."/>
            <person name="Bodenteich A."/>
            <person name="Hartman K."/>
            <person name="Hu X."/>
            <person name="Khan A.S."/>
            <person name="Lane L."/>
            <person name="Tilahun Y."/>
            <person name="Wright H."/>
        </authorList>
    </citation>
    <scope>NUCLEOTIDE SEQUENCE [LARGE SCALE GENOMIC DNA]</scope>
</reference>
<reference key="6">
    <citation type="submission" date="2005-07" db="EMBL/GenBank/DDBJ databases">
        <authorList>
            <person name="Mural R.J."/>
            <person name="Istrail S."/>
            <person name="Sutton G."/>
            <person name="Florea L."/>
            <person name="Halpern A.L."/>
            <person name="Mobarry C.M."/>
            <person name="Lippert R."/>
            <person name="Walenz B."/>
            <person name="Shatkay H."/>
            <person name="Dew I."/>
            <person name="Miller J.R."/>
            <person name="Flanigan M.J."/>
            <person name="Edwards N.J."/>
            <person name="Bolanos R."/>
            <person name="Fasulo D."/>
            <person name="Halldorsson B.V."/>
            <person name="Hannenhalli S."/>
            <person name="Turner R."/>
            <person name="Yooseph S."/>
            <person name="Lu F."/>
            <person name="Nusskern D.R."/>
            <person name="Shue B.C."/>
            <person name="Zheng X.H."/>
            <person name="Zhong F."/>
            <person name="Delcher A.L."/>
            <person name="Huson D.H."/>
            <person name="Kravitz S.A."/>
            <person name="Mouchard L."/>
            <person name="Reinert K."/>
            <person name="Remington K.A."/>
            <person name="Clark A.G."/>
            <person name="Waterman M.S."/>
            <person name="Eichler E.E."/>
            <person name="Adams M.D."/>
            <person name="Hunkapiller M.W."/>
            <person name="Myers E.W."/>
            <person name="Venter J.C."/>
        </authorList>
    </citation>
    <scope>NUCLEOTIDE SEQUENCE [LARGE SCALE GENOMIC DNA]</scope>
</reference>
<reference key="7">
    <citation type="journal article" date="2004" name="Genome Res.">
        <title>The status, quality, and expansion of the NIH full-length cDNA project: the Mammalian Gene Collection (MGC).</title>
        <authorList>
            <consortium name="The MGC Project Team"/>
        </authorList>
    </citation>
    <scope>NUCLEOTIDE SEQUENCE [LARGE SCALE MRNA] (ISOFORMS 1 AND 2)</scope>
    <source>
        <tissue>PNS</tissue>
    </source>
</reference>
<reference key="8">
    <citation type="journal article" date="2001" name="DNA Res.">
        <title>Identification of novel transcribed sequences on human chromosome 22 by expressed sequence tag mapping.</title>
        <authorList>
            <person name="Hirosawa M."/>
            <person name="Nagase T."/>
            <person name="Murahashi Y."/>
            <person name="Kikuno R."/>
            <person name="Ohara O."/>
        </authorList>
    </citation>
    <scope>NUCLEOTIDE SEQUENCE [LARGE SCALE MRNA] OF 57-537 (ISOFORM 1)</scope>
    <source>
        <tissue>Brain</tissue>
    </source>
</reference>
<reference key="9">
    <citation type="journal article" date="2005" name="FEBS Lett.">
        <title>The leucine 10 residue in the pleckstrin homology domain of ceramide kinase is crucial for its catalytic activity.</title>
        <authorList>
            <person name="Kim T.J."/>
            <person name="Mitsutake S."/>
            <person name="Kato M."/>
            <person name="Igarashi Y."/>
        </authorList>
    </citation>
    <scope>MUTAGENESIS OF LEU-10</scope>
</reference>
<reference key="10">
    <citation type="journal article" date="2009" name="Biochem. Biophys. Res. Commun.">
        <title>A lipid binding domain in sphingosine kinase 2.</title>
        <authorList>
            <person name="Don A.S."/>
            <person name="Rosen H."/>
        </authorList>
    </citation>
    <scope>FUNCTION</scope>
    <scope>CATALYTIC ACTIVITY</scope>
    <scope>SUBCELLULAR LOCATION</scope>
    <scope>ACTIVITY REGULATION</scope>
    <scope>REGION REQUIRED FOR BINDING TO SULFATIDE AND PHOSPHOINOSITIDES</scope>
</reference>
<reference key="11">
    <citation type="journal article" date="2010" name="J. Proteome Res.">
        <title>Ceramide kinase profiling by mass spectrometry reveals a conserved phosphorylation pattern downstream of the catalytic site.</title>
        <authorList>
            <person name="Chen W.Q."/>
            <person name="Graf C."/>
            <person name="Zimmel D."/>
            <person name="Rovina P."/>
            <person name="Krapfenbauer K."/>
            <person name="Jaritz M."/>
            <person name="Parker P.J."/>
            <person name="Lubec G."/>
            <person name="Bornancin F."/>
        </authorList>
    </citation>
    <scope>PHOSPHORYLATION AT SER-340 AND SER-408</scope>
    <scope>MUTAGENESIS OF SER-340</scope>
</reference>
<reference key="12">
    <citation type="journal article" date="2016" name="Biol. Pharm. Bull.">
        <title>Effects of glycerophospholipids on ceramide kinase activity: cardiolipin-affected cellular formation of ceramide-1-phosphate.</title>
        <authorList>
            <person name="Matsuzaki W."/>
            <person name="Takahashi H."/>
            <person name="Nakamura H."/>
            <person name="Murayama T."/>
        </authorList>
    </citation>
    <scope>COFACTOR</scope>
    <scope>ACTIVITY REGULATION</scope>
</reference>
<organism>
    <name type="scientific">Homo sapiens</name>
    <name type="common">Human</name>
    <dbReference type="NCBI Taxonomy" id="9606"/>
    <lineage>
        <taxon>Eukaryota</taxon>
        <taxon>Metazoa</taxon>
        <taxon>Chordata</taxon>
        <taxon>Craniata</taxon>
        <taxon>Vertebrata</taxon>
        <taxon>Euteleostomi</taxon>
        <taxon>Mammalia</taxon>
        <taxon>Eutheria</taxon>
        <taxon>Euarchontoglires</taxon>
        <taxon>Primates</taxon>
        <taxon>Haplorrhini</taxon>
        <taxon>Catarrhini</taxon>
        <taxon>Hominidae</taxon>
        <taxon>Homo</taxon>
    </lineage>
</organism>
<comment type="function">
    <text evidence="3 5 6">Catalyzes specifically the phosphorylation of ceramide to form ceramide 1-phosphate (PubMed:11956206, PubMed:16269826, PubMed:19168031). Acts efficiently on natural and analog ceramides (C6, C8, C16 ceramides, and C8-dihydroceramide), to a lesser extent on C2-ceramide and C6-dihydroceramide, but not on other lipids, such as various sphingosines (PubMed:11956206, PubMed:16269826, PubMed:19168031). Shows a greater preference for D-erythro isomer of ceramides (PubMed:16269826). Binds phosphoinositides (PubMed:19168031).</text>
</comment>
<comment type="catalytic activity">
    <reaction evidence="3 5 6">
        <text>an N-acylsphing-4-enine + ATP = an N-acylsphing-4-enine 1-phosphate + ADP + H(+)</text>
        <dbReference type="Rhea" id="RHEA:17929"/>
        <dbReference type="ChEBI" id="CHEBI:15378"/>
        <dbReference type="ChEBI" id="CHEBI:30616"/>
        <dbReference type="ChEBI" id="CHEBI:52639"/>
        <dbReference type="ChEBI" id="CHEBI:57674"/>
        <dbReference type="ChEBI" id="CHEBI:456216"/>
        <dbReference type="EC" id="2.7.1.138"/>
    </reaction>
    <physiologicalReaction direction="left-to-right" evidence="10 11 12">
        <dbReference type="Rhea" id="RHEA:17930"/>
    </physiologicalReaction>
</comment>
<comment type="catalytic activity">
    <reaction evidence="5">
        <text>N-(hexanoyl)sphing-4-enine + ATP = N-hexanoylsphing-4-enine 1-phosphate + ADP + H(+)</text>
        <dbReference type="Rhea" id="RHEA:43312"/>
        <dbReference type="ChEBI" id="CHEBI:15378"/>
        <dbReference type="ChEBI" id="CHEBI:30616"/>
        <dbReference type="ChEBI" id="CHEBI:63867"/>
        <dbReference type="ChEBI" id="CHEBI:82959"/>
        <dbReference type="ChEBI" id="CHEBI:456216"/>
    </reaction>
    <physiologicalReaction direction="left-to-right" evidence="11">
        <dbReference type="Rhea" id="RHEA:43313"/>
    </physiologicalReaction>
</comment>
<comment type="catalytic activity">
    <reaction evidence="5">
        <text>N-(acetyl)-sphing-4-enine + ATP = N-(acetyl)-sphing-4-enine-1-phosphate + ADP + H(+)</text>
        <dbReference type="Rhea" id="RHEA:47904"/>
        <dbReference type="ChEBI" id="CHEBI:15378"/>
        <dbReference type="ChEBI" id="CHEBI:30616"/>
        <dbReference type="ChEBI" id="CHEBI:46979"/>
        <dbReference type="ChEBI" id="CHEBI:85375"/>
        <dbReference type="ChEBI" id="CHEBI:456216"/>
    </reaction>
    <physiologicalReaction direction="left-to-right" evidence="11">
        <dbReference type="Rhea" id="RHEA:47905"/>
    </physiologicalReaction>
</comment>
<comment type="catalytic activity">
    <reaction evidence="5">
        <text>N-hexadecanoylsphing-4-enine + ATP = N-(hexadecanoyl)-sphing-4-enine-1-phosphate + ADP + H(+)</text>
        <dbReference type="Rhea" id="RHEA:46340"/>
        <dbReference type="ChEBI" id="CHEBI:15378"/>
        <dbReference type="ChEBI" id="CHEBI:30616"/>
        <dbReference type="ChEBI" id="CHEBI:72959"/>
        <dbReference type="ChEBI" id="CHEBI:72963"/>
        <dbReference type="ChEBI" id="CHEBI:456216"/>
    </reaction>
    <physiologicalReaction direction="left-to-right" evidence="11">
        <dbReference type="Rhea" id="RHEA:46341"/>
    </physiologicalReaction>
</comment>
<comment type="catalytic activity">
    <reaction evidence="5">
        <text>N-hexanoyl-(4R)-hydroxysphinganine + ATP = N-hexanoyl-(4R)-hydroxysphinganine-1-phosphate + ADP + H(+)</text>
        <dbReference type="Rhea" id="RHEA:47916"/>
        <dbReference type="ChEBI" id="CHEBI:15378"/>
        <dbReference type="ChEBI" id="CHEBI:30616"/>
        <dbReference type="ChEBI" id="CHEBI:88095"/>
        <dbReference type="ChEBI" id="CHEBI:88096"/>
        <dbReference type="ChEBI" id="CHEBI:456216"/>
    </reaction>
    <physiologicalReaction direction="left-to-right" evidence="11">
        <dbReference type="Rhea" id="RHEA:47917"/>
    </physiologicalReaction>
</comment>
<comment type="cofactor">
    <cofactor evidence="5 8">
        <name>Ca(2+)</name>
        <dbReference type="ChEBI" id="CHEBI:29108"/>
    </cofactor>
    <cofactor evidence="5 8">
        <name>Mg(2+)</name>
        <dbReference type="ChEBI" id="CHEBI:18420"/>
    </cofactor>
</comment>
<comment type="activity regulation">
    <text evidence="5 6 8">Inhibited by sulfatide (PubMed:19168031). Inhibited by sphinganine, sphingenine, and N,N-Dimethylsphingosine (DMS) (PubMed:16269826). Cardiolipin at 0.1 uM significantly increases activity, whereas at concentrations &gt;1 uM has an inhibitory effect (PubMed:27725450).</text>
</comment>
<comment type="biophysicochemical properties">
    <kinetics>
        <KM evidence="3">187 uM for C8 ceramide</KM>
        <KM evidence="5">30 uM for C6 ceramide</KM>
        <KM evidence="5">22 uM for C2 ceramide</KM>
        <KM evidence="5">400 uM for ATP (in the presence of 3 mM Mg(2+))</KM>
        <KM evidence="3">32 uM for ATP</KM>
        <Vmax evidence="5">35.0 nmol/min/mg enzyme for C6 ceramide</Vmax>
    </kinetics>
    <phDependence>
        <text evidence="3 5">Optimum pH is 6.0-7.8.</text>
    </phDependence>
</comment>
<comment type="interaction">
    <interactant intactId="EBI-10274247">
        <id>Q8TCT0</id>
    </interactant>
    <interactant intactId="EBI-3905054">
        <id>P13196</id>
        <label>ALAS1</label>
    </interactant>
    <organismsDiffer>false</organismsDiffer>
    <experiments>3</experiments>
</comment>
<comment type="interaction">
    <interactant intactId="EBI-10274247">
        <id>Q8TCT0</id>
    </interactant>
    <interactant intactId="EBI-7043337">
        <id>P05813</id>
        <label>CRYBA1</label>
    </interactant>
    <organismsDiffer>false</organismsDiffer>
    <experiments>3</experiments>
</comment>
<comment type="interaction">
    <interactant intactId="EBI-10274247">
        <id>Q8TCT0</id>
    </interactant>
    <interactant intactId="EBI-3867333">
        <id>A8MQ03</id>
        <label>CYSRT1</label>
    </interactant>
    <organismsDiffer>false</organismsDiffer>
    <experiments>3</experiments>
</comment>
<comment type="interaction">
    <interactant intactId="EBI-10274247">
        <id>Q8TCT0</id>
    </interactant>
    <interactant intactId="EBI-1047093">
        <id>O76011</id>
        <label>KRT34</label>
    </interactant>
    <organismsDiffer>false</organismsDiffer>
    <experiments>3</experiments>
</comment>
<comment type="interaction">
    <interactant intactId="EBI-10274247">
        <id>Q8TCT0</id>
    </interactant>
    <interactant intactId="EBI-11959885">
        <id>Q07627</id>
        <label>KRTAP1-1</label>
    </interactant>
    <organismsDiffer>false</organismsDiffer>
    <experiments>3</experiments>
</comment>
<comment type="interaction">
    <interactant intactId="EBI-10274247">
        <id>Q8TCT0</id>
    </interactant>
    <interactant intactId="EBI-1052037">
        <id>Q8IUC1</id>
        <label>KRTAP11-1</label>
    </interactant>
    <organismsDiffer>false</organismsDiffer>
    <experiments>3</experiments>
</comment>
<comment type="interaction">
    <interactant intactId="EBI-10274247">
        <id>Q8TCT0</id>
    </interactant>
    <interactant intactId="EBI-12811111">
        <id>Q8IUB9</id>
        <label>KRTAP19-1</label>
    </interactant>
    <organismsDiffer>false</organismsDiffer>
    <experiments>3</experiments>
</comment>
<comment type="interaction">
    <interactant intactId="EBI-10274247">
        <id>Q8TCT0</id>
    </interactant>
    <interactant intactId="EBI-12805508">
        <id>Q3LI70</id>
        <label>KRTAP19-6</label>
    </interactant>
    <organismsDiffer>false</organismsDiffer>
    <experiments>3</experiments>
</comment>
<comment type="interaction">
    <interactant intactId="EBI-10274247">
        <id>Q8TCT0</id>
    </interactant>
    <interactant intactId="EBI-9996449">
        <id>Q9BYR8</id>
        <label>KRTAP3-1</label>
    </interactant>
    <organismsDiffer>false</organismsDiffer>
    <experiments>3</experiments>
</comment>
<comment type="interaction">
    <interactant intactId="EBI-10274247">
        <id>Q8TCT0</id>
    </interactant>
    <interactant intactId="EBI-751260">
        <id>Q9BYR7</id>
        <label>KRTAP3-2</label>
    </interactant>
    <organismsDiffer>false</organismsDiffer>
    <experiments>3</experiments>
</comment>
<comment type="interaction">
    <interactant intactId="EBI-10274247">
        <id>Q8TCT0</id>
    </interactant>
    <interactant intactId="EBI-11962084">
        <id>Q3LI66</id>
        <label>KRTAP6-2</label>
    </interactant>
    <organismsDiffer>false</organismsDiffer>
    <experiments>3</experiments>
</comment>
<comment type="interaction">
    <interactant intactId="EBI-10274247">
        <id>Q8TCT0</id>
    </interactant>
    <interactant intactId="EBI-1044640">
        <id>Q9BYQ4</id>
        <label>KRTAP9-2</label>
    </interactant>
    <organismsDiffer>false</organismsDiffer>
    <experiments>3</experiments>
</comment>
<comment type="interaction">
    <interactant intactId="EBI-10274247">
        <id>Q8TCT0</id>
    </interactant>
    <interactant intactId="EBI-742948">
        <id>Q5JR59</id>
        <label>MTUS2</label>
    </interactant>
    <organismsDiffer>false</organismsDiffer>
    <experiments>3</experiments>
</comment>
<comment type="interaction">
    <interactant intactId="EBI-10274247">
        <id>Q8TCT0</id>
    </interactant>
    <interactant intactId="EBI-12868744">
        <id>P0CG21</id>
        <label>NHLRC4</label>
    </interactant>
    <organismsDiffer>false</organismsDiffer>
    <experiments>3</experiments>
</comment>
<comment type="interaction">
    <interactant intactId="EBI-10274247">
        <id>Q8TCT0</id>
    </interactant>
    <interactant intactId="EBI-945833">
        <id>Q7Z3S9</id>
        <label>NOTCH2NLA</label>
    </interactant>
    <organismsDiffer>false</organismsDiffer>
    <experiments>3</experiments>
</comment>
<comment type="interaction">
    <interactant intactId="EBI-10274247">
        <id>Q8TCT0</id>
    </interactant>
    <interactant intactId="EBI-22310682">
        <id>P0DPK4</id>
        <label>NOTCH2NLC</label>
    </interactant>
    <organismsDiffer>false</organismsDiffer>
    <experiments>3</experiments>
</comment>
<comment type="interaction">
    <interactant intactId="EBI-10274247">
        <id>Q8TCT0</id>
    </interactant>
    <interactant intactId="EBI-536879">
        <id>O43482</id>
        <label>OIP5</label>
    </interactant>
    <organismsDiffer>false</organismsDiffer>
    <experiments>3</experiments>
</comment>
<comment type="interaction">
    <interactant intactId="EBI-10274247">
        <id>Q8TCT0</id>
    </interactant>
    <interactant intactId="EBI-742388">
        <id>Q9H8W4</id>
        <label>PLEKHF2</label>
    </interactant>
    <organismsDiffer>false</organismsDiffer>
    <experiments>3</experiments>
</comment>
<comment type="interaction">
    <interactant intactId="EBI-10274247">
        <id>Q8TCT0</id>
    </interactant>
    <interactant intactId="EBI-5235829">
        <id>Q8IWZ5</id>
        <label>TRIM42</label>
    </interactant>
    <organismsDiffer>false</organismsDiffer>
    <experiments>3</experiments>
</comment>
<comment type="subcellular location">
    <subcellularLocation>
        <location evidence="6">Cytoplasm</location>
    </subcellularLocation>
    <subcellularLocation>
        <location evidence="5 6">Cell membrane</location>
        <topology evidence="6">Peripheral membrane protein</topology>
    </subcellularLocation>
</comment>
<comment type="alternative products">
    <event type="alternative splicing"/>
    <isoform>
        <id>Q8TCT0-1</id>
        <name>1</name>
        <sequence type="displayed"/>
    </isoform>
    <isoform>
        <id>Q8TCT0-2</id>
        <name>2</name>
        <sequence type="described" ref="VSP_056944"/>
    </isoform>
</comment>
<comment type="tissue specificity">
    <text evidence="3">High level expression in heart, brain, skeletal muscle, kidney and liver; moderate in peripheral blood leukocytes and thymus; very low in spleen, small intestine, placenta and lung.</text>
</comment>
<proteinExistence type="evidence at protein level"/>
<sequence>MGATGAAEPLQSVLWVKQQRCAVSLEPARALLRWWRSPGPGAGAPGADACSVPVSEIIAVEETDVHGKHQGSGKWQKMEKPYAFTVHCVKRARRHRWKWAQVTFWCPEEQLCHLWLQTLREMLEKLTSRPKHLLVFINPFGGKGQGKRIYERKVAPLFTLASITTDIIVTEHANQAKETLYEINIDKYDGIVCVGGDGMFSEVLHGLIGRTQRSAGVDQNHPRAVLVPSSLRIGIIPAGSTDCVCYSTVGTSDAETSALHIVVGDSLAMDVSSVHHNSTLLRYSVSLLGYGFYGDIIKDSEKKRWLGLARYDFSGLKTFLSHHCYEGTVSFLPAQHTVGSPRDRKPCRAGCFVCRQSKQQLEEEQKKALYGLEAAEDVEEWQVVCGKFLAINATNMSCACRRSPRGLSPAAHLGDGSSDLILIRKCSRFNFLRFLIRHTNQQDQFDFTFVEVYRVKKFQFTSKHMEDEDSDLKEGGKKRFGHICSSHPSCCCTVSNSSWNCDGEVLHSPAIEVRVHCQLVRLFARGIEENPKPDSHS</sequence>
<gene>
    <name type="primary">CERK</name>
    <name type="synonym">KIAA1646</name>
</gene>
<keyword id="KW-0025">Alternative splicing</keyword>
<keyword id="KW-0067">ATP-binding</keyword>
<keyword id="KW-0106">Calcium</keyword>
<keyword id="KW-1003">Cell membrane</keyword>
<keyword id="KW-0963">Cytoplasm</keyword>
<keyword id="KW-0418">Kinase</keyword>
<keyword id="KW-0443">Lipid metabolism</keyword>
<keyword id="KW-0460">Magnesium</keyword>
<keyword id="KW-0472">Membrane</keyword>
<keyword id="KW-0547">Nucleotide-binding</keyword>
<keyword id="KW-0597">Phosphoprotein</keyword>
<keyword id="KW-1267">Proteomics identification</keyword>
<keyword id="KW-1185">Reference proteome</keyword>
<keyword id="KW-0808">Transferase</keyword>
<dbReference type="EC" id="2.7.1.138" evidence="3 5 6"/>
<dbReference type="EMBL" id="AB079066">
    <property type="protein sequence ID" value="BAC01154.1"/>
    <property type="molecule type" value="mRNA"/>
</dbReference>
<dbReference type="EMBL" id="AJ457828">
    <property type="protein sequence ID" value="CAD29884.1"/>
    <property type="molecule type" value="mRNA"/>
</dbReference>
<dbReference type="EMBL" id="CR456404">
    <property type="protein sequence ID" value="CAG30290.1"/>
    <property type="molecule type" value="mRNA"/>
</dbReference>
<dbReference type="EMBL" id="AK291476">
    <property type="protein sequence ID" value="BAF84165.1"/>
    <property type="molecule type" value="mRNA"/>
</dbReference>
<dbReference type="EMBL" id="AL096766">
    <property type="status" value="NOT_ANNOTATED_CDS"/>
    <property type="molecule type" value="Genomic_DNA"/>
</dbReference>
<dbReference type="EMBL" id="AL118516">
    <property type="status" value="NOT_ANNOTATED_CDS"/>
    <property type="molecule type" value="Genomic_DNA"/>
</dbReference>
<dbReference type="EMBL" id="CH471138">
    <property type="protein sequence ID" value="EAW73440.1"/>
    <property type="molecule type" value="Genomic_DNA"/>
</dbReference>
<dbReference type="EMBL" id="CH471138">
    <property type="protein sequence ID" value="EAW73442.1"/>
    <property type="molecule type" value="Genomic_DNA"/>
</dbReference>
<dbReference type="EMBL" id="BC067255">
    <property type="protein sequence ID" value="AAH67255.1"/>
    <property type="molecule type" value="mRNA"/>
</dbReference>
<dbReference type="EMBL" id="BC126940">
    <property type="protein sequence ID" value="AAI26941.1"/>
    <property type="molecule type" value="mRNA"/>
</dbReference>
<dbReference type="EMBL" id="AB051433">
    <property type="protein sequence ID" value="BAB33316.1"/>
    <property type="molecule type" value="mRNA"/>
</dbReference>
<dbReference type="CCDS" id="CCDS14077.1">
    <molecule id="Q8TCT0-1"/>
</dbReference>
<dbReference type="RefSeq" id="NP_073603.2">
    <molecule id="Q8TCT0-1"/>
    <property type="nucleotide sequence ID" value="NM_022766.5"/>
</dbReference>
<dbReference type="SMR" id="Q8TCT0"/>
<dbReference type="BioGRID" id="122291">
    <property type="interactions" value="88"/>
</dbReference>
<dbReference type="FunCoup" id="Q8TCT0">
    <property type="interactions" value="1008"/>
</dbReference>
<dbReference type="IntAct" id="Q8TCT0">
    <property type="interactions" value="80"/>
</dbReference>
<dbReference type="STRING" id="9606.ENSP00000216264"/>
<dbReference type="BindingDB" id="Q8TCT0"/>
<dbReference type="ChEMBL" id="CHEMBL1764936"/>
<dbReference type="GuidetoPHARMACOLOGY" id="2473"/>
<dbReference type="SwissLipids" id="SLP:000001354"/>
<dbReference type="GlyGen" id="Q8TCT0">
    <property type="glycosylation" value="1 site, 1 O-linked glycan (1 site)"/>
</dbReference>
<dbReference type="iPTMnet" id="Q8TCT0"/>
<dbReference type="PhosphoSitePlus" id="Q8TCT0"/>
<dbReference type="SwissPalm" id="Q8TCT0"/>
<dbReference type="BioMuta" id="CERK"/>
<dbReference type="DMDM" id="30172885"/>
<dbReference type="jPOST" id="Q8TCT0"/>
<dbReference type="MassIVE" id="Q8TCT0"/>
<dbReference type="PaxDb" id="9606-ENSP00000216264"/>
<dbReference type="PeptideAtlas" id="Q8TCT0"/>
<dbReference type="ProteomicsDB" id="66749"/>
<dbReference type="ProteomicsDB" id="74154">
    <molecule id="Q8TCT0-1"/>
</dbReference>
<dbReference type="Pumba" id="Q8TCT0"/>
<dbReference type="Antibodypedia" id="326">
    <property type="antibodies" value="309 antibodies from 30 providers"/>
</dbReference>
<dbReference type="DNASU" id="64781"/>
<dbReference type="Ensembl" id="ENST00000216264.13">
    <molecule id="Q8TCT0-1"/>
    <property type="protein sequence ID" value="ENSP00000216264.8"/>
    <property type="gene ID" value="ENSG00000100422.14"/>
</dbReference>
<dbReference type="GeneID" id="64781"/>
<dbReference type="KEGG" id="hsa:64781"/>
<dbReference type="MANE-Select" id="ENST00000216264.13">
    <property type="protein sequence ID" value="ENSP00000216264.8"/>
    <property type="RefSeq nucleotide sequence ID" value="NM_022766.6"/>
    <property type="RefSeq protein sequence ID" value="NP_073603.2"/>
</dbReference>
<dbReference type="UCSC" id="uc003bia.4">
    <molecule id="Q8TCT0-1"/>
    <property type="organism name" value="human"/>
</dbReference>
<dbReference type="AGR" id="HGNC:19256"/>
<dbReference type="CTD" id="64781"/>
<dbReference type="DisGeNET" id="64781"/>
<dbReference type="GeneCards" id="CERK"/>
<dbReference type="HGNC" id="HGNC:19256">
    <property type="gene designation" value="CERK"/>
</dbReference>
<dbReference type="HPA" id="ENSG00000100422">
    <property type="expression patterns" value="Low tissue specificity"/>
</dbReference>
<dbReference type="MIM" id="610307">
    <property type="type" value="gene"/>
</dbReference>
<dbReference type="neXtProt" id="NX_Q8TCT0"/>
<dbReference type="OpenTargets" id="ENSG00000100422"/>
<dbReference type="PharmGKB" id="PA134958321"/>
<dbReference type="VEuPathDB" id="HostDB:ENSG00000100422"/>
<dbReference type="eggNOG" id="KOG1115">
    <property type="taxonomic scope" value="Eukaryota"/>
</dbReference>
<dbReference type="GeneTree" id="ENSGT00940000156976"/>
<dbReference type="HOGENOM" id="CLU_013399_2_2_1"/>
<dbReference type="InParanoid" id="Q8TCT0"/>
<dbReference type="OMA" id="HHRWKWA"/>
<dbReference type="OrthoDB" id="530923at2759"/>
<dbReference type="PAN-GO" id="Q8TCT0">
    <property type="GO annotations" value="3 GO annotations based on evolutionary models"/>
</dbReference>
<dbReference type="PhylomeDB" id="Q8TCT0"/>
<dbReference type="TreeFam" id="TF314514"/>
<dbReference type="BRENDA" id="2.7.1.138">
    <property type="organism ID" value="2681"/>
</dbReference>
<dbReference type="PathwayCommons" id="Q8TCT0"/>
<dbReference type="Reactome" id="R-HSA-9840309">
    <property type="pathway name" value="Glycosphingolipid biosynthesis"/>
</dbReference>
<dbReference type="SABIO-RK" id="Q8TCT0"/>
<dbReference type="SignaLink" id="Q8TCT0"/>
<dbReference type="SIGNOR" id="Q8TCT0"/>
<dbReference type="BioGRID-ORCS" id="64781">
    <property type="hits" value="10 hits in 1171 CRISPR screens"/>
</dbReference>
<dbReference type="ChiTaRS" id="CERK">
    <property type="organism name" value="human"/>
</dbReference>
<dbReference type="GeneWiki" id="CERK"/>
<dbReference type="GenomeRNAi" id="64781"/>
<dbReference type="Pharos" id="Q8TCT0">
    <property type="development level" value="Tchem"/>
</dbReference>
<dbReference type="PRO" id="PR:Q8TCT0"/>
<dbReference type="Proteomes" id="UP000005640">
    <property type="component" value="Chromosome 22"/>
</dbReference>
<dbReference type="RNAct" id="Q8TCT0">
    <property type="molecule type" value="protein"/>
</dbReference>
<dbReference type="Bgee" id="ENSG00000100422">
    <property type="expression patterns" value="Expressed in islet of Langerhans and 187 other cell types or tissues"/>
</dbReference>
<dbReference type="ExpressionAtlas" id="Q8TCT0">
    <property type="expression patterns" value="baseline and differential"/>
</dbReference>
<dbReference type="GO" id="GO:0005737">
    <property type="term" value="C:cytoplasm"/>
    <property type="evidence" value="ECO:0007669"/>
    <property type="project" value="UniProtKB-SubCell"/>
</dbReference>
<dbReference type="GO" id="GO:0016020">
    <property type="term" value="C:membrane"/>
    <property type="evidence" value="ECO:0000314"/>
    <property type="project" value="UniProtKB"/>
</dbReference>
<dbReference type="GO" id="GO:0005886">
    <property type="term" value="C:plasma membrane"/>
    <property type="evidence" value="ECO:0000314"/>
    <property type="project" value="UniProtKB"/>
</dbReference>
<dbReference type="GO" id="GO:0005524">
    <property type="term" value="F:ATP binding"/>
    <property type="evidence" value="ECO:0007669"/>
    <property type="project" value="UniProtKB-KW"/>
</dbReference>
<dbReference type="GO" id="GO:0001729">
    <property type="term" value="F:ceramide kinase activity"/>
    <property type="evidence" value="ECO:0000314"/>
    <property type="project" value="UniProtKB"/>
</dbReference>
<dbReference type="GO" id="GO:0000287">
    <property type="term" value="F:magnesium ion binding"/>
    <property type="evidence" value="ECO:0000314"/>
    <property type="project" value="UniProtKB"/>
</dbReference>
<dbReference type="GO" id="GO:0006672">
    <property type="term" value="P:ceramide metabolic process"/>
    <property type="evidence" value="ECO:0000314"/>
    <property type="project" value="UniProtKB"/>
</dbReference>
<dbReference type="GO" id="GO:0006688">
    <property type="term" value="P:glycosphingolipid biosynthetic process"/>
    <property type="evidence" value="ECO:0000304"/>
    <property type="project" value="Reactome"/>
</dbReference>
<dbReference type="FunFam" id="2.60.200.40:FF:000014">
    <property type="entry name" value="Ceramide kinase"/>
    <property type="match status" value="1"/>
</dbReference>
<dbReference type="FunFam" id="3.40.50.10330:FF:000022">
    <property type="entry name" value="Ceramide kinase"/>
    <property type="match status" value="1"/>
</dbReference>
<dbReference type="Gene3D" id="2.60.200.40">
    <property type="match status" value="1"/>
</dbReference>
<dbReference type="Gene3D" id="3.40.50.10330">
    <property type="entry name" value="Probable inorganic polyphosphate/atp-NAD kinase, domain 1"/>
    <property type="match status" value="1"/>
</dbReference>
<dbReference type="InterPro" id="IPR017438">
    <property type="entry name" value="ATP-NAD_kinase_N"/>
</dbReference>
<dbReference type="InterPro" id="IPR045363">
    <property type="entry name" value="CERK_C"/>
</dbReference>
<dbReference type="InterPro" id="IPR001206">
    <property type="entry name" value="Diacylglycerol_kinase_cat_dom"/>
</dbReference>
<dbReference type="InterPro" id="IPR050187">
    <property type="entry name" value="Lipid_Phosphate_FormReg"/>
</dbReference>
<dbReference type="InterPro" id="IPR016064">
    <property type="entry name" value="NAD/diacylglycerol_kinase_sf"/>
</dbReference>
<dbReference type="PANTHER" id="PTHR12358:SF25">
    <property type="entry name" value="CERAMIDE KINASE"/>
    <property type="match status" value="1"/>
</dbReference>
<dbReference type="PANTHER" id="PTHR12358">
    <property type="entry name" value="SPHINGOSINE KINASE"/>
    <property type="match status" value="1"/>
</dbReference>
<dbReference type="Pfam" id="PF19280">
    <property type="entry name" value="CERK_C"/>
    <property type="match status" value="1"/>
</dbReference>
<dbReference type="Pfam" id="PF00781">
    <property type="entry name" value="DAGK_cat"/>
    <property type="match status" value="1"/>
</dbReference>
<dbReference type="Pfam" id="PF25382">
    <property type="entry name" value="PH_CERK"/>
    <property type="match status" value="1"/>
</dbReference>
<dbReference type="SMART" id="SM00046">
    <property type="entry name" value="DAGKc"/>
    <property type="match status" value="1"/>
</dbReference>
<dbReference type="SUPFAM" id="SSF111331">
    <property type="entry name" value="NAD kinase/diacylglycerol kinase-like"/>
    <property type="match status" value="1"/>
</dbReference>
<dbReference type="PROSITE" id="PS50146">
    <property type="entry name" value="DAGK"/>
    <property type="match status" value="1"/>
</dbReference>